<organism>
    <name type="scientific">Human immunodeficiency virus type 1 group M subtype K (isolate 97ZR-EQTB11)</name>
    <name type="common">HIV-1</name>
    <dbReference type="NCBI Taxonomy" id="388907"/>
    <lineage>
        <taxon>Viruses</taxon>
        <taxon>Riboviria</taxon>
        <taxon>Pararnavirae</taxon>
        <taxon>Artverviricota</taxon>
        <taxon>Revtraviricetes</taxon>
        <taxon>Ortervirales</taxon>
        <taxon>Retroviridae</taxon>
        <taxon>Orthoretrovirinae</taxon>
        <taxon>Lentivirus</taxon>
        <taxon>Human immunodeficiency virus type 1</taxon>
    </lineage>
</organism>
<proteinExistence type="inferred from homology"/>
<feature type="chain" id="PRO_0000244997" description="Protein Rev">
    <location>
        <begin position="1"/>
        <end position="116"/>
    </location>
</feature>
<feature type="region of interest" description="Homomultimerization" evidence="1">
    <location>
        <begin position="18"/>
        <end position="26"/>
    </location>
</feature>
<feature type="region of interest" description="Disordered" evidence="2">
    <location>
        <begin position="25"/>
        <end position="49"/>
    </location>
</feature>
<feature type="region of interest" description="Disordered" evidence="2">
    <location>
        <begin position="82"/>
        <end position="116"/>
    </location>
</feature>
<feature type="short sequence motif" description="Nuclear localization signal and RNA-binding (RRE)" evidence="1">
    <location>
        <begin position="34"/>
        <end position="50"/>
    </location>
</feature>
<feature type="short sequence motif" description="Nuclear export signal and binding to XPO1" evidence="1">
    <location>
        <begin position="73"/>
        <end position="84"/>
    </location>
</feature>
<feature type="compositionally biased region" description="Basic residues" evidence="2">
    <location>
        <begin position="36"/>
        <end position="49"/>
    </location>
</feature>
<feature type="modified residue" description="Phosphoserine; by host CK2" evidence="1">
    <location>
        <position position="8"/>
    </location>
</feature>
<feature type="modified residue" description="Phosphoserine; by host" evidence="1">
    <location>
        <position position="99"/>
    </location>
</feature>
<dbReference type="EMBL" id="AJ249235">
    <property type="status" value="NOT_ANNOTATED_CDS"/>
    <property type="molecule type" value="Genomic_RNA"/>
</dbReference>
<dbReference type="SMR" id="P0C1L5"/>
<dbReference type="Proteomes" id="UP000100183">
    <property type="component" value="Segment"/>
</dbReference>
<dbReference type="GO" id="GO:0030430">
    <property type="term" value="C:host cell cytoplasm"/>
    <property type="evidence" value="ECO:0007669"/>
    <property type="project" value="UniProtKB-SubCell"/>
</dbReference>
<dbReference type="GO" id="GO:0044196">
    <property type="term" value="C:host cell nucleolus"/>
    <property type="evidence" value="ECO:0007669"/>
    <property type="project" value="UniProtKB-SubCell"/>
</dbReference>
<dbReference type="GO" id="GO:0003700">
    <property type="term" value="F:DNA-binding transcription factor activity"/>
    <property type="evidence" value="ECO:0007669"/>
    <property type="project" value="UniProtKB-UniRule"/>
</dbReference>
<dbReference type="GO" id="GO:0003723">
    <property type="term" value="F:RNA binding"/>
    <property type="evidence" value="ECO:0007669"/>
    <property type="project" value="UniProtKB-UniRule"/>
</dbReference>
<dbReference type="GO" id="GO:0051028">
    <property type="term" value="P:mRNA transport"/>
    <property type="evidence" value="ECO:0007669"/>
    <property type="project" value="UniProtKB-UniRule"/>
</dbReference>
<dbReference type="GO" id="GO:0016032">
    <property type="term" value="P:viral process"/>
    <property type="evidence" value="ECO:0007669"/>
    <property type="project" value="UniProtKB-UniRule"/>
</dbReference>
<dbReference type="Gene3D" id="6.10.140.630">
    <property type="match status" value="1"/>
</dbReference>
<dbReference type="HAMAP" id="MF_04077">
    <property type="entry name" value="REV_HIV1"/>
    <property type="match status" value="1"/>
</dbReference>
<dbReference type="InterPro" id="IPR000625">
    <property type="entry name" value="REV_protein"/>
</dbReference>
<dbReference type="Pfam" id="PF00424">
    <property type="entry name" value="REV"/>
    <property type="match status" value="1"/>
</dbReference>
<name>REV_HV197</name>
<protein>
    <recommendedName>
        <fullName evidence="1">Protein Rev</fullName>
    </recommendedName>
    <alternativeName>
        <fullName evidence="1">ART/TRS</fullName>
    </alternativeName>
    <alternativeName>
        <fullName evidence="1">Anti-repression transactivator</fullName>
    </alternativeName>
    <alternativeName>
        <fullName evidence="1">Regulator of expression of viral proteins</fullName>
    </alternativeName>
</protein>
<sequence length="116" mass="13159">MAGRRGDSEQQLLTPVRIIKILYQSNPYPKPEGTRQARRNRRRRWRARQRQIREISQRVLSSCLGRSTEPVPLQLPPLERLSLNCDEDSGQGTEGELGSPQIPVEPDTVLGSGDKE</sequence>
<comment type="function">
    <text evidence="1">Escorts unspliced or incompletely spliced viral pre-mRNAs (late transcripts) out of the nucleus of infected cells. These pre-mRNAs carry a recognition sequence called Rev responsive element (RRE) located in the env gene, that is not present in fully spliced viral mRNAs (early transcripts). This function is essential since most viral proteins are translated from unspliced or partially spliced pre-mRNAs which cannot exit the nucleus by the pathway used by fully processed cellular mRNAs. Rev itself is translated from a fully spliced mRNA that readily exits the nucleus. Rev's nuclear localization signal (NLS) binds directly to KPNB1/Importin beta-1 without previous binding to KPNA1/Importin alpha-1. KPNB1 binds to the GDP bound form of RAN (Ran-GDP) and targets Rev to the nucleus. In the nucleus, the conversion from Ran-GDP to Ran-GTP dissociates Rev from KPNB1 and allows Rev's binding to the RRE in viral pre-mRNAs. Rev multimerization on the RRE via cooperative assembly exposes its nuclear export signal (NES) to the surface. Rev can then form a complex with XPO1/CRM1 and Ran-GTP, leading to nuclear export of the complex. Conversion from Ran-GTP to Ran-GDP mediates dissociation of the Rev/RRE/XPO1/RAN complex, so that Rev can return to the nucleus for a subsequent round of export. Beside KPNB1, also seems to interact with TNPO1/Transportin-1, RANBP5/IPO5 and IPO7/RANBP7 for nuclear import. The nucleoporin-like HRB/RIP is an essential cofactor that probably indirectly interacts with Rev to release HIV RNAs from the perinuclear region to the cytoplasm.</text>
</comment>
<comment type="subunit">
    <text evidence="1">Homomultimer; when bound to the RRE. Multimeric assembly is essential for activity and may involve XPO1. Binds to human KPNB1, XPO1, TNPO1, RANBP5 and IPO7. Interacts with the viral Integrase. Interacts with human KHDRBS1. Interacts with human NAP1; this interaction decreases Rev multimerization and stimulates its activity. Interacts with human DEAD-box helicases DDX3 and DDX24; these interactions may serve for viral RNA export to the cytoplasm and packaging, respectively. Interacts with human PSIP1; this interaction may inhibit HIV-1 DNA integration by promoting dissociation of the Integrase-LEDGF/p75 complex.</text>
</comment>
<comment type="subcellular location">
    <subcellularLocation>
        <location evidence="1">Host nucleus</location>
        <location evidence="1">Host nucleolus</location>
    </subcellularLocation>
    <subcellularLocation>
        <location evidence="1">Host cytoplasm</location>
    </subcellularLocation>
    <text evidence="1">The presence of both nuclear import and nuclear export signals leads to continuous shuttling between the nucleus and cytoplasm.</text>
</comment>
<comment type="domain">
    <text evidence="1">The RNA-binding motif binds to the RRE, a 240 bp stem-and-loop structure present in incompletely spliced viral pre-mRNAs. This region also contains the NLS which mediates nuclear localization via KPNB1 binding and, when the N-terminal sequence is present, nucleolar targeting. These overlapping functions prevent Rev bound to RRE from undesirable return to the nucleus. When Rev binds the RRE, the NLS becomes masked while the NES remains accessible. The leucine-rich NES mediates binding to human XPO1.</text>
</comment>
<comment type="PTM">
    <text evidence="1">Asymmetrically arginine dimethylated at one site by host PRMT6. Methylation impairs the RNA-binding activity and export of viral RNA from the nucleus to the cytoplasm.</text>
</comment>
<comment type="PTM">
    <text evidence="1">Phosphorylated by protein kinase CK2. Presence of, and maybe binding to the N-terminus of the regulatory beta subunit of CK2 is necessary for CK2-mediated Rev's phosphorylation.</text>
</comment>
<comment type="miscellaneous">
    <text evidence="1">HIV-1 lineages are divided in three main groups, M (for Major), O (for Outlier), and N (for New, or Non-M, Non-O). The vast majority of strains found worldwide belong to the group M. Group O seems to be endemic to and largely confined to Cameroon and neighboring countries in West Central Africa, where these viruses represent a small minority of HIV-1 strains. The group N is represented by a limited number of isolates from Cameroonian persons. The group M is further subdivided in 9 clades or subtypes (A to D, F to H, J and K).</text>
</comment>
<comment type="similarity">
    <text evidence="1">Belongs to the HIV-1 REV protein family.</text>
</comment>
<evidence type="ECO:0000255" key="1">
    <source>
        <dbReference type="HAMAP-Rule" id="MF_04077"/>
    </source>
</evidence>
<evidence type="ECO:0000256" key="2">
    <source>
        <dbReference type="SAM" id="MobiDB-lite"/>
    </source>
</evidence>
<keyword id="KW-0014">AIDS</keyword>
<keyword id="KW-1035">Host cytoplasm</keyword>
<keyword id="KW-1048">Host nucleus</keyword>
<keyword id="KW-0945">Host-virus interaction</keyword>
<keyword id="KW-0488">Methylation</keyword>
<keyword id="KW-0509">mRNA transport</keyword>
<keyword id="KW-0597">Phosphoprotein</keyword>
<keyword id="KW-0694">RNA-binding</keyword>
<keyword id="KW-0813">Transport</keyword>
<gene>
    <name evidence="1" type="primary">rev</name>
</gene>
<reference key="1">
    <citation type="journal article" date="2000" name="AIDS Res. Hum. Retroviruses">
        <title>Near-full-length genome sequencing of divergent African HIV type 1 subtype F viruses leads to the identification of a new HIV type 1 subtype designated K.</title>
        <authorList>
            <person name="Triques K."/>
            <person name="Bourgeois A."/>
            <person name="Vidale N."/>
            <person name="Mpoudi-Ngole E."/>
            <person name="Mulanga-Kabeya C."/>
            <person name="Nzilambi N."/>
            <person name="Torimiro N."/>
            <person name="Saman E."/>
            <person name="Delaporte E."/>
            <person name="Peeters M."/>
        </authorList>
    </citation>
    <scope>NUCLEOTIDE SEQUENCE [GENOMIC RNA]</scope>
</reference>
<reference key="2">
    <citation type="journal article" date="1999" name="Arch. Biochem. Biophys.">
        <title>The ins and outs of HIV Rev.</title>
        <authorList>
            <person name="Hope T.J."/>
        </authorList>
    </citation>
    <scope>REVIEW</scope>
</reference>
<organismHost>
    <name type="scientific">Homo sapiens</name>
    <name type="common">Human</name>
    <dbReference type="NCBI Taxonomy" id="9606"/>
</organismHost>
<accession>P0C1L5</accession>